<proteinExistence type="inferred from homology"/>
<dbReference type="EMBL" id="CY015090">
    <property type="protein sequence ID" value="ABI85119.1"/>
    <property type="molecule type" value="Genomic_RNA"/>
</dbReference>
<dbReference type="SMR" id="Q0A2G4"/>
<dbReference type="Proteomes" id="UP000008583">
    <property type="component" value="Genome"/>
</dbReference>
<dbReference type="GO" id="GO:0020002">
    <property type="term" value="C:host cell plasma membrane"/>
    <property type="evidence" value="ECO:0007669"/>
    <property type="project" value="UniProtKB-SubCell"/>
</dbReference>
<dbReference type="GO" id="GO:0016020">
    <property type="term" value="C:membrane"/>
    <property type="evidence" value="ECO:0007669"/>
    <property type="project" value="UniProtKB-UniRule"/>
</dbReference>
<dbReference type="GO" id="GO:0055036">
    <property type="term" value="C:virion membrane"/>
    <property type="evidence" value="ECO:0007669"/>
    <property type="project" value="UniProtKB-SubCell"/>
</dbReference>
<dbReference type="GO" id="GO:0005216">
    <property type="term" value="F:monoatomic ion channel activity"/>
    <property type="evidence" value="ECO:0007669"/>
    <property type="project" value="UniProtKB-UniRule"/>
</dbReference>
<dbReference type="GO" id="GO:0015078">
    <property type="term" value="F:proton transmembrane transporter activity"/>
    <property type="evidence" value="ECO:0007669"/>
    <property type="project" value="UniProtKB-UniRule"/>
</dbReference>
<dbReference type="GO" id="GO:0051259">
    <property type="term" value="P:protein complex oligomerization"/>
    <property type="evidence" value="ECO:0007669"/>
    <property type="project" value="UniProtKB-UniRule"/>
</dbReference>
<dbReference type="GO" id="GO:0044694">
    <property type="term" value="P:symbiont genome entry into host cell via pore formation in plasma membrane"/>
    <property type="evidence" value="ECO:0007669"/>
    <property type="project" value="UniProtKB-UniRule"/>
</dbReference>
<dbReference type="GO" id="GO:0140321">
    <property type="term" value="P:symbiont-mediated suppression of host autophagy"/>
    <property type="evidence" value="ECO:0007669"/>
    <property type="project" value="UniProtKB-KW"/>
</dbReference>
<dbReference type="Gene3D" id="6.10.250.1640">
    <property type="match status" value="1"/>
</dbReference>
<dbReference type="HAMAP" id="MF_04069">
    <property type="entry name" value="INFV_M2"/>
    <property type="match status" value="1"/>
</dbReference>
<dbReference type="InterPro" id="IPR002089">
    <property type="entry name" value="Flu_M2"/>
</dbReference>
<dbReference type="Pfam" id="PF00599">
    <property type="entry name" value="Flu_M2"/>
    <property type="match status" value="1"/>
</dbReference>
<organism>
    <name type="scientific">Influenza A virus (strain A/Turkey/Ireland/1378/1983 H5N8)</name>
    <dbReference type="NCBI Taxonomy" id="380285"/>
    <lineage>
        <taxon>Viruses</taxon>
        <taxon>Riboviria</taxon>
        <taxon>Orthornavirae</taxon>
        <taxon>Negarnaviricota</taxon>
        <taxon>Polyploviricotina</taxon>
        <taxon>Insthoviricetes</taxon>
        <taxon>Articulavirales</taxon>
        <taxon>Orthomyxoviridae</taxon>
        <taxon>Alphainfluenzavirus</taxon>
        <taxon>Alphainfluenzavirus influenzae</taxon>
        <taxon>Influenza A virus</taxon>
    </lineage>
</organism>
<protein>
    <recommendedName>
        <fullName evidence="1">Matrix protein 2</fullName>
    </recommendedName>
    <alternativeName>
        <fullName evidence="1">Proton channel protein M2</fullName>
    </alternativeName>
</protein>
<keyword id="KW-0025">Alternative splicing</keyword>
<keyword id="KW-1015">Disulfide bond</keyword>
<keyword id="KW-1032">Host cell membrane</keyword>
<keyword id="KW-1043">Host membrane</keyword>
<keyword id="KW-0945">Host-virus interaction</keyword>
<keyword id="KW-0375">Hydrogen ion transport</keyword>
<keyword id="KW-1083">Inhibition of host autophagy by virus</keyword>
<keyword id="KW-0407">Ion channel</keyword>
<keyword id="KW-0406">Ion transport</keyword>
<keyword id="KW-0449">Lipoprotein</keyword>
<keyword id="KW-0472">Membrane</keyword>
<keyword id="KW-0564">Palmitate</keyword>
<keyword id="KW-0597">Phosphoprotein</keyword>
<keyword id="KW-0735">Signal-anchor</keyword>
<keyword id="KW-0812">Transmembrane</keyword>
<keyword id="KW-1133">Transmembrane helix</keyword>
<keyword id="KW-0813">Transport</keyword>
<keyword id="KW-1182">Viral ion channel</keyword>
<keyword id="KW-0946">Virion</keyword>
<sequence length="97" mass="11172">MSLLTEVETPTRNGWECKCSDSSDPLVIAASIIGILHLILWILDRLFFRCVYRRLKYGLKRGPSTEGVPESMREEYRQEQQSAVDVDDGHFVNIELE</sequence>
<comment type="function">
    <text evidence="1">Forms a proton-selective ion channel that is necessary for the efficient release of the viral genome during virus entry. After attaching to the cell surface, the virion enters the cell by endocytosis. Acidification of the endosome triggers M2 ion channel activity. The influx of protons into virion interior is believed to disrupt interactions between the viral ribonucleoprotein (RNP), matrix protein 1 (M1), and lipid bilayers, thereby freeing the viral genome from interaction with viral proteins and enabling RNA segments to migrate to the host cell nucleus, where influenza virus RNA transcription and replication occur. Also plays a role in viral proteins secretory pathway. Elevates the intravesicular pH of normally acidic compartments, such as trans-Golgi network, preventing newly formed hemagglutinin from premature switching to the fusion-active conformation.</text>
</comment>
<comment type="activity regulation">
    <text>The M2 protein from most influenza A strains is inhibited by amantadine and rimantadine, resulting in viral uncoating incapacity. Emergence of amantadine-resistant variants is usually rapid.</text>
</comment>
<comment type="subunit">
    <text evidence="1">Homotetramer; composed of two disulfide-linked dimers held together by non-covalent interactions. May interact with matrix protein 1.</text>
</comment>
<comment type="subcellular location">
    <subcellularLocation>
        <location evidence="1">Virion membrane</location>
    </subcellularLocation>
    <subcellularLocation>
        <location evidence="1">Host apical cell membrane</location>
        <topology evidence="1">Single-pass type III membrane protein</topology>
    </subcellularLocation>
    <text evidence="1">Abundantly expressed at the apical plasma membrane in infected polarized epithelial cells, in close proximity to budding and assembled virions. Minor component of virions (only 16-20 molecules/virion).</text>
</comment>
<comment type="alternative products">
    <event type="alternative splicing"/>
    <isoform>
        <id>Q0A2G4-1</id>
        <name>M2</name>
        <sequence type="displayed"/>
    </isoform>
    <isoform>
        <id>Q0A2G3-1</id>
        <name>M1</name>
        <sequence type="external"/>
    </isoform>
    <text>Only the first 9 residues are shared by the 2 isoforms.</text>
</comment>
<comment type="domain">
    <text evidence="1">Cytoplasmic tail plays an important role in virion assembly and morphogenesis.</text>
</comment>
<comment type="miscellaneous">
    <text evidence="1">When the channel is activated, one or more imidazole moieties of His-37 probably become bi-protonated.</text>
</comment>
<comment type="similarity">
    <text evidence="1">Belongs to the influenza viruses matrix protein M2 family.</text>
</comment>
<gene>
    <name evidence="1" type="primary">M</name>
</gene>
<accession>Q0A2G4</accession>
<organismHost>
    <name type="scientific">Aves</name>
    <dbReference type="NCBI Taxonomy" id="8782"/>
</organismHost>
<name>M2_I83A4</name>
<reference key="1">
    <citation type="journal article" date="2006" name="Science">
        <title>Large-scale sequence analysis of avian influenza isolates.</title>
        <authorList>
            <person name="Obenauer J.C."/>
            <person name="Denson J."/>
            <person name="Mehta P.K."/>
            <person name="Su X."/>
            <person name="Mukatira S."/>
            <person name="Finkelstein D.B."/>
            <person name="Xu X."/>
            <person name="Wang J."/>
            <person name="Ma J."/>
            <person name="Fan Y."/>
            <person name="Rakestraw K.M."/>
            <person name="Webster R.G."/>
            <person name="Hoffmann E."/>
            <person name="Krauss S."/>
            <person name="Zheng J."/>
            <person name="Zhang Z."/>
            <person name="Naeve C.W."/>
        </authorList>
    </citation>
    <scope>NUCLEOTIDE SEQUENCE [GENOMIC RNA]</scope>
</reference>
<evidence type="ECO:0000255" key="1">
    <source>
        <dbReference type="HAMAP-Rule" id="MF_04069"/>
    </source>
</evidence>
<evidence type="ECO:0000256" key="2">
    <source>
        <dbReference type="SAM" id="MobiDB-lite"/>
    </source>
</evidence>
<feature type="chain" id="PRO_0000326378" description="Matrix protein 2">
    <location>
        <begin position="1"/>
        <end position="97"/>
    </location>
</feature>
<feature type="topological domain" description="Virion surface" evidence="1">
    <location>
        <begin position="1"/>
        <end position="22"/>
    </location>
</feature>
<feature type="transmembrane region" description="Helical; Signal-anchor for type III membrane protein" evidence="1">
    <location>
        <begin position="23"/>
        <end position="43"/>
    </location>
</feature>
<feature type="topological domain" description="Intravirion" evidence="1">
    <location>
        <begin position="44"/>
        <end position="97"/>
    </location>
</feature>
<feature type="region of interest" description="Disordered" evidence="2">
    <location>
        <begin position="60"/>
        <end position="83"/>
    </location>
</feature>
<feature type="site" description="Essential for channel activity, possibly by being protonated during channel activation, and by forming the channel gate and the selective filter" evidence="1">
    <location>
        <position position="37"/>
    </location>
</feature>
<feature type="site" description="Seems to be involved in pH gating" evidence="1">
    <location>
        <position position="41"/>
    </location>
</feature>
<feature type="modified residue" description="Phosphoserine; by host" evidence="1">
    <location>
        <position position="64"/>
    </location>
</feature>
<feature type="modified residue" description="Phosphoserine; by host" evidence="1">
    <location>
        <position position="82"/>
    </location>
</feature>
<feature type="lipid moiety-binding region" description="S-palmitoyl cysteine; by host" evidence="1">
    <location>
        <position position="50"/>
    </location>
</feature>
<feature type="disulfide bond" description="Interchain (with C-17)" evidence="1">
    <location>
        <position position="17"/>
    </location>
</feature>
<feature type="disulfide bond" description="Interchain (with C-19)" evidence="1">
    <location>
        <position position="19"/>
    </location>
</feature>